<comment type="catalytic activity">
    <reaction evidence="1">
        <text>L-citrulline + L-aspartate + ATP = 2-(N(omega)-L-arginino)succinate + AMP + diphosphate + H(+)</text>
        <dbReference type="Rhea" id="RHEA:10932"/>
        <dbReference type="ChEBI" id="CHEBI:15378"/>
        <dbReference type="ChEBI" id="CHEBI:29991"/>
        <dbReference type="ChEBI" id="CHEBI:30616"/>
        <dbReference type="ChEBI" id="CHEBI:33019"/>
        <dbReference type="ChEBI" id="CHEBI:57472"/>
        <dbReference type="ChEBI" id="CHEBI:57743"/>
        <dbReference type="ChEBI" id="CHEBI:456215"/>
        <dbReference type="EC" id="6.3.4.5"/>
    </reaction>
</comment>
<comment type="pathway">
    <text evidence="1">Amino-acid biosynthesis; L-arginine biosynthesis; L-arginine from L-ornithine and carbamoyl phosphate: step 2/3.</text>
</comment>
<comment type="subunit">
    <text evidence="1">Homotetramer.</text>
</comment>
<comment type="subcellular location">
    <subcellularLocation>
        <location evidence="1">Cytoplasm</location>
    </subcellularLocation>
</comment>
<comment type="similarity">
    <text evidence="1">Belongs to the argininosuccinate synthase family. Type 1 subfamily.</text>
</comment>
<organism>
    <name type="scientific">Hahella chejuensis (strain KCTC 2396)</name>
    <dbReference type="NCBI Taxonomy" id="349521"/>
    <lineage>
        <taxon>Bacteria</taxon>
        <taxon>Pseudomonadati</taxon>
        <taxon>Pseudomonadota</taxon>
        <taxon>Gammaproteobacteria</taxon>
        <taxon>Oceanospirillales</taxon>
        <taxon>Hahellaceae</taxon>
        <taxon>Hahella</taxon>
    </lineage>
</organism>
<feature type="chain" id="PRO_0000263931" description="Argininosuccinate synthase">
    <location>
        <begin position="1"/>
        <end position="404"/>
    </location>
</feature>
<feature type="binding site" evidence="1">
    <location>
        <begin position="10"/>
        <end position="18"/>
    </location>
    <ligand>
        <name>ATP</name>
        <dbReference type="ChEBI" id="CHEBI:30616"/>
    </ligand>
</feature>
<feature type="binding site" evidence="1">
    <location>
        <position position="37"/>
    </location>
    <ligand>
        <name>ATP</name>
        <dbReference type="ChEBI" id="CHEBI:30616"/>
    </ligand>
</feature>
<feature type="binding site" evidence="1">
    <location>
        <position position="88"/>
    </location>
    <ligand>
        <name>L-citrulline</name>
        <dbReference type="ChEBI" id="CHEBI:57743"/>
    </ligand>
</feature>
<feature type="binding site" evidence="1">
    <location>
        <position position="93"/>
    </location>
    <ligand>
        <name>L-citrulline</name>
        <dbReference type="ChEBI" id="CHEBI:57743"/>
    </ligand>
</feature>
<feature type="binding site" evidence="1">
    <location>
        <position position="118"/>
    </location>
    <ligand>
        <name>ATP</name>
        <dbReference type="ChEBI" id="CHEBI:30616"/>
    </ligand>
</feature>
<feature type="binding site" evidence="1">
    <location>
        <position position="120"/>
    </location>
    <ligand>
        <name>L-aspartate</name>
        <dbReference type="ChEBI" id="CHEBI:29991"/>
    </ligand>
</feature>
<feature type="binding site" evidence="1">
    <location>
        <position position="124"/>
    </location>
    <ligand>
        <name>L-aspartate</name>
        <dbReference type="ChEBI" id="CHEBI:29991"/>
    </ligand>
</feature>
<feature type="binding site" evidence="1">
    <location>
        <position position="124"/>
    </location>
    <ligand>
        <name>L-citrulline</name>
        <dbReference type="ChEBI" id="CHEBI:57743"/>
    </ligand>
</feature>
<feature type="binding site" evidence="1">
    <location>
        <position position="125"/>
    </location>
    <ligand>
        <name>L-aspartate</name>
        <dbReference type="ChEBI" id="CHEBI:29991"/>
    </ligand>
</feature>
<feature type="binding site" evidence="1">
    <location>
        <position position="128"/>
    </location>
    <ligand>
        <name>L-citrulline</name>
        <dbReference type="ChEBI" id="CHEBI:57743"/>
    </ligand>
</feature>
<feature type="binding site" evidence="1">
    <location>
        <position position="178"/>
    </location>
    <ligand>
        <name>L-citrulline</name>
        <dbReference type="ChEBI" id="CHEBI:57743"/>
    </ligand>
</feature>
<feature type="binding site" evidence="1">
    <location>
        <position position="187"/>
    </location>
    <ligand>
        <name>L-citrulline</name>
        <dbReference type="ChEBI" id="CHEBI:57743"/>
    </ligand>
</feature>
<feature type="binding site" evidence="1">
    <location>
        <position position="263"/>
    </location>
    <ligand>
        <name>L-citrulline</name>
        <dbReference type="ChEBI" id="CHEBI:57743"/>
    </ligand>
</feature>
<feature type="binding site" evidence="1">
    <location>
        <position position="275"/>
    </location>
    <ligand>
        <name>L-citrulline</name>
        <dbReference type="ChEBI" id="CHEBI:57743"/>
    </ligand>
</feature>
<keyword id="KW-0028">Amino-acid biosynthesis</keyword>
<keyword id="KW-0055">Arginine biosynthesis</keyword>
<keyword id="KW-0067">ATP-binding</keyword>
<keyword id="KW-0963">Cytoplasm</keyword>
<keyword id="KW-0436">Ligase</keyword>
<keyword id="KW-0547">Nucleotide-binding</keyword>
<keyword id="KW-1185">Reference proteome</keyword>
<evidence type="ECO:0000255" key="1">
    <source>
        <dbReference type="HAMAP-Rule" id="MF_00005"/>
    </source>
</evidence>
<accession>Q2SCE5</accession>
<dbReference type="EC" id="6.3.4.5" evidence="1"/>
<dbReference type="EMBL" id="CP000155">
    <property type="protein sequence ID" value="ABC31679.1"/>
    <property type="molecule type" value="Genomic_DNA"/>
</dbReference>
<dbReference type="RefSeq" id="WP_011398744.1">
    <property type="nucleotide sequence ID" value="NC_007645.1"/>
</dbReference>
<dbReference type="SMR" id="Q2SCE5"/>
<dbReference type="STRING" id="349521.HCH_04989"/>
<dbReference type="KEGG" id="hch:HCH_04989"/>
<dbReference type="eggNOG" id="COG0137">
    <property type="taxonomic scope" value="Bacteria"/>
</dbReference>
<dbReference type="HOGENOM" id="CLU_032784_4_2_6"/>
<dbReference type="OrthoDB" id="9801641at2"/>
<dbReference type="UniPathway" id="UPA00068">
    <property type="reaction ID" value="UER00113"/>
</dbReference>
<dbReference type="Proteomes" id="UP000000238">
    <property type="component" value="Chromosome"/>
</dbReference>
<dbReference type="GO" id="GO:0005737">
    <property type="term" value="C:cytoplasm"/>
    <property type="evidence" value="ECO:0007669"/>
    <property type="project" value="UniProtKB-SubCell"/>
</dbReference>
<dbReference type="GO" id="GO:0004055">
    <property type="term" value="F:argininosuccinate synthase activity"/>
    <property type="evidence" value="ECO:0007669"/>
    <property type="project" value="UniProtKB-UniRule"/>
</dbReference>
<dbReference type="GO" id="GO:0005524">
    <property type="term" value="F:ATP binding"/>
    <property type="evidence" value="ECO:0007669"/>
    <property type="project" value="UniProtKB-UniRule"/>
</dbReference>
<dbReference type="GO" id="GO:0000053">
    <property type="term" value="P:argininosuccinate metabolic process"/>
    <property type="evidence" value="ECO:0007669"/>
    <property type="project" value="TreeGrafter"/>
</dbReference>
<dbReference type="GO" id="GO:0006526">
    <property type="term" value="P:L-arginine biosynthetic process"/>
    <property type="evidence" value="ECO:0007669"/>
    <property type="project" value="UniProtKB-UniRule"/>
</dbReference>
<dbReference type="GO" id="GO:0000050">
    <property type="term" value="P:urea cycle"/>
    <property type="evidence" value="ECO:0007669"/>
    <property type="project" value="TreeGrafter"/>
</dbReference>
<dbReference type="CDD" id="cd01999">
    <property type="entry name" value="ASS"/>
    <property type="match status" value="1"/>
</dbReference>
<dbReference type="FunFam" id="1.20.5.470:FF:000001">
    <property type="entry name" value="Argininosuccinate synthase"/>
    <property type="match status" value="1"/>
</dbReference>
<dbReference type="FunFam" id="3.40.50.620:FF:000019">
    <property type="entry name" value="Argininosuccinate synthase"/>
    <property type="match status" value="1"/>
</dbReference>
<dbReference type="FunFam" id="3.90.1260.10:FF:000007">
    <property type="entry name" value="Argininosuccinate synthase"/>
    <property type="match status" value="1"/>
</dbReference>
<dbReference type="Gene3D" id="3.90.1260.10">
    <property type="entry name" value="Argininosuccinate synthetase, chain A, domain 2"/>
    <property type="match status" value="1"/>
</dbReference>
<dbReference type="Gene3D" id="3.40.50.620">
    <property type="entry name" value="HUPs"/>
    <property type="match status" value="1"/>
</dbReference>
<dbReference type="Gene3D" id="1.20.5.470">
    <property type="entry name" value="Single helix bin"/>
    <property type="match status" value="1"/>
</dbReference>
<dbReference type="HAMAP" id="MF_00005">
    <property type="entry name" value="Arg_succ_synth_type1"/>
    <property type="match status" value="1"/>
</dbReference>
<dbReference type="InterPro" id="IPR048268">
    <property type="entry name" value="Arginosuc_syn_C"/>
</dbReference>
<dbReference type="InterPro" id="IPR048267">
    <property type="entry name" value="Arginosuc_syn_N"/>
</dbReference>
<dbReference type="InterPro" id="IPR001518">
    <property type="entry name" value="Arginosuc_synth"/>
</dbReference>
<dbReference type="InterPro" id="IPR018223">
    <property type="entry name" value="Arginosuc_synth_CS"/>
</dbReference>
<dbReference type="InterPro" id="IPR023434">
    <property type="entry name" value="Arginosuc_synth_type_1_subfam"/>
</dbReference>
<dbReference type="InterPro" id="IPR024074">
    <property type="entry name" value="AS_cat/multimer_dom_body"/>
</dbReference>
<dbReference type="InterPro" id="IPR014729">
    <property type="entry name" value="Rossmann-like_a/b/a_fold"/>
</dbReference>
<dbReference type="NCBIfam" id="TIGR00032">
    <property type="entry name" value="argG"/>
    <property type="match status" value="1"/>
</dbReference>
<dbReference type="NCBIfam" id="NF001770">
    <property type="entry name" value="PRK00509.1"/>
    <property type="match status" value="1"/>
</dbReference>
<dbReference type="PANTHER" id="PTHR11587">
    <property type="entry name" value="ARGININOSUCCINATE SYNTHASE"/>
    <property type="match status" value="1"/>
</dbReference>
<dbReference type="PANTHER" id="PTHR11587:SF2">
    <property type="entry name" value="ARGININOSUCCINATE SYNTHASE"/>
    <property type="match status" value="1"/>
</dbReference>
<dbReference type="Pfam" id="PF20979">
    <property type="entry name" value="Arginosuc_syn_C"/>
    <property type="match status" value="1"/>
</dbReference>
<dbReference type="Pfam" id="PF00764">
    <property type="entry name" value="Arginosuc_synth"/>
    <property type="match status" value="1"/>
</dbReference>
<dbReference type="SUPFAM" id="SSF52402">
    <property type="entry name" value="Adenine nucleotide alpha hydrolases-like"/>
    <property type="match status" value="1"/>
</dbReference>
<dbReference type="SUPFAM" id="SSF69864">
    <property type="entry name" value="Argininosuccinate synthetase, C-terminal domain"/>
    <property type="match status" value="1"/>
</dbReference>
<dbReference type="PROSITE" id="PS00564">
    <property type="entry name" value="ARGININOSUCCIN_SYN_1"/>
    <property type="match status" value="1"/>
</dbReference>
<dbReference type="PROSITE" id="PS00565">
    <property type="entry name" value="ARGININOSUCCIN_SYN_2"/>
    <property type="match status" value="1"/>
</dbReference>
<gene>
    <name evidence="1" type="primary">argG</name>
    <name type="ordered locus">HCH_04989</name>
</gene>
<proteinExistence type="inferred from homology"/>
<sequence>MSKVNKVVLAYSGGLDTSVIVKWLQENYDCEVVTFTADIGQGEEVEPARAKAEKLGVKQIFIEDLREEFARDFVFPMFRANTIYEGEYLLGTSIARPLIAKRLVEIANETGADAISHGATGKGNDQVRFELGAYALKPGIKVIAPWREWDLTSREKLLTYCDTHDIAVEKKKGKSPYSMDANLLHISYEGGILEDPWEEAEEDMWRWSVSPEAAPDQATYLELTYQNGDIVAIDGEALAPHEVIERLNKVGGVNGVGRLDIVENRYVGMKSRGCYETPGGTIMLRAHRAIESITLDKELAHLKDSLMPKYAELIYNGYWWSPERLALQKLIDESQQHVNGVVRVKLYKGNVIVAGRKSEDSLFDDRIATFEDDGGVYNQRDAEGFIKLNALRMRIAADKGRSMK</sequence>
<name>ASSY_HAHCH</name>
<protein>
    <recommendedName>
        <fullName evidence="1">Argininosuccinate synthase</fullName>
        <ecNumber evidence="1">6.3.4.5</ecNumber>
    </recommendedName>
    <alternativeName>
        <fullName evidence="1">Citrulline--aspartate ligase</fullName>
    </alternativeName>
</protein>
<reference key="1">
    <citation type="journal article" date="2005" name="Nucleic Acids Res.">
        <title>Genomic blueprint of Hahella chejuensis, a marine microbe producing an algicidal agent.</title>
        <authorList>
            <person name="Jeong H."/>
            <person name="Yim J.H."/>
            <person name="Lee C."/>
            <person name="Choi S.-H."/>
            <person name="Park Y.K."/>
            <person name="Yoon S.H."/>
            <person name="Hur C.-G."/>
            <person name="Kang H.-Y."/>
            <person name="Kim D."/>
            <person name="Lee H.H."/>
            <person name="Park K.H."/>
            <person name="Park S.-H."/>
            <person name="Park H.-S."/>
            <person name="Lee H.K."/>
            <person name="Oh T.K."/>
            <person name="Kim J.F."/>
        </authorList>
    </citation>
    <scope>NUCLEOTIDE SEQUENCE [LARGE SCALE GENOMIC DNA]</scope>
    <source>
        <strain>KCTC 2396</strain>
    </source>
</reference>